<proteinExistence type="evidence at protein level"/>
<organism>
    <name type="scientific">Trichuris trichiura</name>
    <name type="common">Whipworm</name>
    <name type="synonym">Trichocephalus trichiurus</name>
    <dbReference type="NCBI Taxonomy" id="36087"/>
    <lineage>
        <taxon>Eukaryota</taxon>
        <taxon>Metazoa</taxon>
        <taxon>Ecdysozoa</taxon>
        <taxon>Nematoda</taxon>
        <taxon>Enoplea</taxon>
        <taxon>Dorylaimia</taxon>
        <taxon>Trichinellida</taxon>
        <taxon>Trichuridae</taxon>
        <taxon>Trichuris</taxon>
    </lineage>
</organism>
<reference key="1">
    <citation type="journal article" date="2001" name="Biochem. J.">
        <title>Macrophage migration inhibitory factor of the parasitic nematode Trichinella spiralis.</title>
        <authorList>
            <person name="Tan T.H.P."/>
            <person name="Edgerton S.A.V."/>
            <person name="Kumari R."/>
            <person name="McAlister M.S.B."/>
            <person name="Roe S.M."/>
            <person name="Nagl S."/>
            <person name="Pearl L.H."/>
            <person name="Selkirk M.E."/>
            <person name="Bianco A.E."/>
            <person name="Totty N.F."/>
            <person name="Engwerda C."/>
            <person name="Gray C.A."/>
            <person name="Meyer D.J."/>
            <person name="Rowe S.M."/>
        </authorList>
    </citation>
    <scope>NUCLEOTIDE SEQUENCE [MRNA]</scope>
    <scope>PROTEIN SEQUENCE OF 2-34; 48-69 AND 80-109</scope>
    <scope>CATALYTIC ACTIVITY</scope>
</reference>
<evidence type="ECO:0000250" key="1"/>
<evidence type="ECO:0000269" key="2">
    <source>
    </source>
</evidence>
<evidence type="ECO:0000305" key="3"/>
<protein>
    <recommendedName>
        <fullName>Macrophage migration inhibitory factor homolog</fullName>
        <shortName>MIF</shortName>
        <ecNumber>5.3.2.1</ecNumber>
    </recommendedName>
    <alternativeName>
        <fullName>L-dopachrome isomerase</fullName>
    </alternativeName>
    <alternativeName>
        <fullName>L-dopachrome tautomerase</fullName>
        <ecNumber>5.3.3.12</ecNumber>
    </alternativeName>
    <alternativeName>
        <fullName>Phenylpyruvate tautomerase</fullName>
    </alternativeName>
</protein>
<keyword id="KW-0202">Cytokine</keyword>
<keyword id="KW-0903">Direct protein sequencing</keyword>
<keyword id="KW-0413">Isomerase</keyword>
<keyword id="KW-0964">Secreted</keyword>
<name>MIFH_TRITR</name>
<feature type="initiator methionine" description="Removed" evidence="2">
    <location>
        <position position="1"/>
    </location>
</feature>
<feature type="chain" id="PRO_0000158076" description="Macrophage migration inhibitory factor homolog">
    <location>
        <begin position="2"/>
        <end position="114"/>
    </location>
</feature>
<feature type="active site" description="Proton acceptor; via imino nitrogen" evidence="1">
    <location>
        <position position="2"/>
    </location>
</feature>
<feature type="binding site" evidence="1">
    <location>
        <position position="33"/>
    </location>
    <ligand>
        <name>substrate</name>
    </ligand>
</feature>
<feature type="binding site" evidence="1">
    <location>
        <position position="98"/>
    </location>
    <ligand>
        <name>substrate</name>
    </ligand>
</feature>
<comment type="function">
    <text evidence="1">Tautomerization of the methyl ester of L-dopachrome. Inhibits migration of human peripheral blood mononuclear cells (By similarity).</text>
</comment>
<comment type="catalytic activity">
    <reaction evidence="2">
        <text>L-dopachrome = 5,6-dihydroxyindole-2-carboxylate</text>
        <dbReference type="Rhea" id="RHEA:13041"/>
        <dbReference type="ChEBI" id="CHEBI:16875"/>
        <dbReference type="ChEBI" id="CHEBI:57509"/>
        <dbReference type="EC" id="5.3.3.12"/>
    </reaction>
</comment>
<comment type="catalytic activity">
    <reaction evidence="2">
        <text>3-phenylpyruvate = enol-phenylpyruvate</text>
        <dbReference type="Rhea" id="RHEA:17097"/>
        <dbReference type="ChEBI" id="CHEBI:16815"/>
        <dbReference type="ChEBI" id="CHEBI:18005"/>
        <dbReference type="EC" id="5.3.2.1"/>
    </reaction>
</comment>
<comment type="subcellular location">
    <subcellularLocation>
        <location evidence="1">Secreted</location>
    </subcellularLocation>
</comment>
<comment type="similarity">
    <text evidence="3">Belongs to the MIF family.</text>
</comment>
<sequence>MPIFTFSTNVPSENISVDFLKSTSKLIAGMLGKPESYVAVHINGGQKITFGGTDAPAGFGQLLSLGGVGGEKNRSHSAKLFKHLTDGLGIPGNRMYINFVDMRGSDVGYNGSTF</sequence>
<accession>P81748</accession>
<accession>Q9U920</accession>
<dbReference type="EC" id="5.3.2.1"/>
<dbReference type="EC" id="5.3.3.12"/>
<dbReference type="EMBL" id="AJ237770">
    <property type="protein sequence ID" value="CAB46355.1"/>
    <property type="molecule type" value="mRNA"/>
</dbReference>
<dbReference type="SMR" id="P81748"/>
<dbReference type="GO" id="GO:0005615">
    <property type="term" value="C:extracellular space"/>
    <property type="evidence" value="ECO:0007669"/>
    <property type="project" value="UniProtKB-KW"/>
</dbReference>
<dbReference type="GO" id="GO:0005125">
    <property type="term" value="F:cytokine activity"/>
    <property type="evidence" value="ECO:0007669"/>
    <property type="project" value="UniProtKB-KW"/>
</dbReference>
<dbReference type="GO" id="GO:0004167">
    <property type="term" value="F:dopachrome isomerase activity"/>
    <property type="evidence" value="ECO:0007669"/>
    <property type="project" value="UniProtKB-EC"/>
</dbReference>
<dbReference type="GO" id="GO:0050178">
    <property type="term" value="F:phenylpyruvate tautomerase activity"/>
    <property type="evidence" value="ECO:0007669"/>
    <property type="project" value="UniProtKB-EC"/>
</dbReference>
<dbReference type="Gene3D" id="3.30.429.10">
    <property type="entry name" value="Macrophage Migration Inhibitory Factor"/>
    <property type="match status" value="1"/>
</dbReference>
<dbReference type="InterPro" id="IPR001398">
    <property type="entry name" value="Macrophage_inhib_fac"/>
</dbReference>
<dbReference type="InterPro" id="IPR014347">
    <property type="entry name" value="Tautomerase/MIF_sf"/>
</dbReference>
<dbReference type="PANTHER" id="PTHR11954">
    <property type="entry name" value="D-DOPACHROME DECARBOXYLASE"/>
    <property type="match status" value="1"/>
</dbReference>
<dbReference type="PANTHER" id="PTHR11954:SF6">
    <property type="entry name" value="MACROPHAGE MIGRATION INHIBITORY FACTOR"/>
    <property type="match status" value="1"/>
</dbReference>
<dbReference type="Pfam" id="PF01187">
    <property type="entry name" value="MIF"/>
    <property type="match status" value="1"/>
</dbReference>
<dbReference type="SUPFAM" id="SSF55331">
    <property type="entry name" value="Tautomerase/MIF"/>
    <property type="match status" value="1"/>
</dbReference>